<keyword id="KW-0025">Alternative splicing</keyword>
<keyword id="KW-0036">Amyotrophic lateral sclerosis</keyword>
<keyword id="KW-0966">Cell projection</keyword>
<keyword id="KW-0144">Charcot-Marie-Tooth disease</keyword>
<keyword id="KW-0175">Coiled coil</keyword>
<keyword id="KW-0963">Cytoplasm</keyword>
<keyword id="KW-0206">Cytoskeleton</keyword>
<keyword id="KW-0225">Disease variant</keyword>
<keyword id="KW-0403">Intermediate filament</keyword>
<keyword id="KW-0523">Neurodegeneration</keyword>
<keyword id="KW-0622">Neuropathy</keyword>
<keyword id="KW-0597">Phosphoprotein</keyword>
<keyword id="KW-1267">Proteomics identification</keyword>
<keyword id="KW-1185">Reference proteome</keyword>
<keyword id="KW-0677">Repeat</keyword>
<gene>
    <name type="primary">NEFH</name>
    <name type="synonym">KIAA0845</name>
    <name type="synonym">NFH</name>
</gene>
<proteinExistence type="evidence at protein level"/>
<comment type="function">
    <text evidence="2">Neurofilaments usually contain three intermediate filament proteins: NEFL, NEFM, and NEFH which are involved in the maintenance of neuronal caliber. NEFH has an important function in mature axons that is not subserved by the two smaller NF proteins. May additionally cooperate with the neuronal intermediate filament proteins PRPH and INA to form neuronal filamentous networks (By similarity).</text>
</comment>
<comment type="subunit">
    <text evidence="1">Forms heterodimers with NEFL; which can further hetero-oligomerize (in vitro) (By similarity). Forms heterodimers with INA (in vitro) (By similarity).</text>
</comment>
<comment type="interaction">
    <interactant intactId="EBI-2880271">
        <id>P12036</id>
    </interactant>
    <interactant intactId="EBI-77613">
        <id>P05067</id>
        <label>APP</label>
    </interactant>
    <organismsDiffer>false</organismsDiffer>
    <experiments>3</experiments>
</comment>
<comment type="interaction">
    <interactant intactId="EBI-2880271">
        <id>P12036</id>
    </interactant>
    <interactant intactId="EBI-352528">
        <id>P10809</id>
        <label>HSPD1</label>
    </interactant>
    <organismsDiffer>false</organismsDiffer>
    <experiments>3</experiments>
</comment>
<comment type="subcellular location">
    <subcellularLocation>
        <location evidence="5">Cytoplasm</location>
        <location evidence="5">Cytoskeleton</location>
    </subcellularLocation>
    <subcellularLocation>
        <location evidence="2">Cell projection</location>
        <location evidence="2">Axon</location>
    </subcellularLocation>
</comment>
<comment type="alternative products">
    <event type="alternative splicing"/>
    <isoform>
        <id>P12036-1</id>
        <name>1</name>
        <sequence type="displayed"/>
    </isoform>
    <isoform>
        <id>P12036-2</id>
        <name>2</name>
        <sequence type="described" ref="VSP_036706"/>
    </isoform>
</comment>
<comment type="PTM">
    <text evidence="8">There are a number of repeats of the tripeptide K-S-P, NFH is phosphorylated on a number of the serines in this motif. It is thought that phosphorylation of NFH results in the formation of interfilament cross bridges that are important in the maintenance of axonal caliber.</text>
</comment>
<comment type="PTM">
    <text evidence="8">Phosphorylation seems to play a major role in the functioning of the larger neurofilament polypeptides (NF-M and NF-H), the levels of phosphorylation being altered developmentally and coincidentally with a change in the neurofilament function.</text>
</comment>
<comment type="PTM">
    <text evidence="8">Phosphorylated in the head and rod regions by the PKC kinase PKN1, leading to the inhibition of polymerization.</text>
</comment>
<comment type="polymorphism">
    <text>The number of repeats is shown to vary between 29 and 30.</text>
</comment>
<comment type="disease" evidence="7">
    <disease id="DI-00107">
        <name>Amyotrophic lateral sclerosis</name>
        <acronym>ALS</acronym>
        <description>A neurodegenerative disorder affecting upper motor neurons in the brain and lower motor neurons in the brain stem and spinal cord, resulting in fatal paralysis. Sensory abnormalities are absent. The pathologic hallmarks of the disease include pallor of the corticospinal tract due to loss of motor neurons, presence of ubiquitin-positive inclusions within surviving motor neurons, and deposition of pathologic aggregates. The etiology of amyotrophic lateral sclerosis is likely to be multifactorial, involving both genetic and environmental factors. The disease is inherited in 5-10% of the cases.</description>
        <dbReference type="MIM" id="105400"/>
    </disease>
    <text>Disease susceptibility is associated with variants affecting the gene represented in this entry.</text>
</comment>
<comment type="disease" evidence="5">
    <disease id="DI-04709">
        <name>Charcot-Marie-Tooth disease, axonal, type 2CC</name>
        <acronym>CMT2CC</acronym>
        <description>An axonal form of Charcot-Marie-Tooth disease, a disorder of the peripheral nervous system, characterized by progressive weakness and atrophy, initially of the peroneal muscles and later of the distal muscles of the arms. Charcot-Marie-Tooth disease is classified in two main groups on the basis of electrophysiologic properties and histopathology: primary peripheral demyelinating neuropathies (designated CMT1 when they are dominantly inherited) and primary peripheral axonal neuropathies (CMT2). Neuropathies of the CMT2 group are characterized by signs of axonal degeneration in the absence of obvious myelin alterations, normal or slightly reduced nerve conduction velocities, and progressive distal muscle weakness and atrophy.</description>
        <dbReference type="MIM" id="616924"/>
    </disease>
    <text>The disease is caused by variants affecting the gene represented in this entry.</text>
</comment>
<comment type="similarity">
    <text evidence="3">Belongs to the intermediate filament family.</text>
</comment>
<comment type="sequence caution" evidence="10">
    <conflict type="erroneous initiation">
        <sequence resource="EMBL-CDS" id="BAA74868"/>
    </conflict>
    <text>Extended N-terminus.</text>
</comment>
<comment type="sequence caution" evidence="10">
    <conflict type="erroneous initiation">
        <sequence resource="EMBL-CDS" id="BAG63896"/>
    </conflict>
    <text>Truncated N-terminus.</text>
</comment>
<comment type="online information" name="Alsod">
    <link uri="https://alsod.ac.uk/"/>
    <text>ALS genetic mutations db</text>
</comment>
<evidence type="ECO:0000250" key="1">
    <source>
        <dbReference type="UniProtKB" id="P16884"/>
    </source>
</evidence>
<evidence type="ECO:0000250" key="2">
    <source>
        <dbReference type="UniProtKB" id="P19246"/>
    </source>
</evidence>
<evidence type="ECO:0000255" key="3">
    <source>
        <dbReference type="PROSITE-ProRule" id="PRU01188"/>
    </source>
</evidence>
<evidence type="ECO:0000256" key="4">
    <source>
        <dbReference type="SAM" id="MobiDB-lite"/>
    </source>
</evidence>
<evidence type="ECO:0000269" key="5">
    <source>
    </source>
</evidence>
<evidence type="ECO:0000269" key="6">
    <source>
    </source>
</evidence>
<evidence type="ECO:0000269" key="7">
    <source>
    </source>
</evidence>
<evidence type="ECO:0000269" key="8">
    <source>
    </source>
</evidence>
<evidence type="ECO:0000303" key="9">
    <source>
    </source>
</evidence>
<evidence type="ECO:0000305" key="10"/>
<evidence type="ECO:0007744" key="11">
    <source>
    </source>
</evidence>
<accession>P12036</accession>
<accession>B4DYY4</accession>
<accession>Q96HF8</accession>
<accession>Q9UJS7</accession>
<accession>Q9UQ14</accession>
<protein>
    <recommendedName>
        <fullName>Neurofilament heavy polypeptide</fullName>
        <shortName>NF-H</shortName>
    </recommendedName>
    <alternativeName>
        <fullName>200 kDa neurofilament protein</fullName>
    </alternativeName>
    <alternativeName>
        <fullName>Neurofilament triplet H protein</fullName>
    </alternativeName>
</protein>
<organism>
    <name type="scientific">Homo sapiens</name>
    <name type="common">Human</name>
    <dbReference type="NCBI Taxonomy" id="9606"/>
    <lineage>
        <taxon>Eukaryota</taxon>
        <taxon>Metazoa</taxon>
        <taxon>Chordata</taxon>
        <taxon>Craniata</taxon>
        <taxon>Vertebrata</taxon>
        <taxon>Euteleostomi</taxon>
        <taxon>Mammalia</taxon>
        <taxon>Eutheria</taxon>
        <taxon>Euarchontoglires</taxon>
        <taxon>Primates</taxon>
        <taxon>Haplorrhini</taxon>
        <taxon>Catarrhini</taxon>
        <taxon>Hominidae</taxon>
        <taxon>Homo</taxon>
    </lineage>
</organism>
<dbReference type="EMBL" id="X15306">
    <property type="protein sequence ID" value="CAA33366.1"/>
    <property type="molecule type" value="Genomic_DNA"/>
</dbReference>
<dbReference type="EMBL" id="X15307">
    <property type="protein sequence ID" value="CAA33366.1"/>
    <property type="status" value="JOINED"/>
    <property type="molecule type" value="Genomic_DNA"/>
</dbReference>
<dbReference type="EMBL" id="X15308">
    <property type="protein sequence ID" value="CAA33366.1"/>
    <property type="status" value="JOINED"/>
    <property type="molecule type" value="Genomic_DNA"/>
</dbReference>
<dbReference type="EMBL" id="X15309">
    <property type="protein sequence ID" value="CAA33366.1"/>
    <property type="status" value="JOINED"/>
    <property type="molecule type" value="Genomic_DNA"/>
</dbReference>
<dbReference type="EMBL" id="AF203032">
    <property type="protein sequence ID" value="AAF13722.1"/>
    <property type="molecule type" value="mRNA"/>
</dbReference>
<dbReference type="EMBL" id="AB020652">
    <property type="protein sequence ID" value="BAA74868.2"/>
    <property type="status" value="ALT_INIT"/>
    <property type="molecule type" value="mRNA"/>
</dbReference>
<dbReference type="EMBL" id="AK302660">
    <property type="protein sequence ID" value="BAG63896.1"/>
    <property type="status" value="ALT_INIT"/>
    <property type="molecule type" value="mRNA"/>
</dbReference>
<dbReference type="EMBL" id="AC000035">
    <property type="status" value="NOT_ANNOTATED_CDS"/>
    <property type="molecule type" value="Genomic_DNA"/>
</dbReference>
<dbReference type="EMBL" id="BC008648">
    <property type="protein sequence ID" value="AAH08648.1"/>
    <property type="molecule type" value="mRNA"/>
</dbReference>
<dbReference type="EMBL" id="BC073969">
    <property type="protein sequence ID" value="AAH73969.1"/>
    <property type="molecule type" value="mRNA"/>
</dbReference>
<dbReference type="CCDS" id="CCDS13858.1">
    <molecule id="P12036-1"/>
</dbReference>
<dbReference type="PIR" id="S00979">
    <property type="entry name" value="QFHUH"/>
</dbReference>
<dbReference type="RefSeq" id="NP_066554.2">
    <molecule id="P12036-1"/>
    <property type="nucleotide sequence ID" value="NM_021076.3"/>
</dbReference>
<dbReference type="SMR" id="P12036"/>
<dbReference type="BioGRID" id="110819">
    <property type="interactions" value="59"/>
</dbReference>
<dbReference type="FunCoup" id="P12036">
    <property type="interactions" value="217"/>
</dbReference>
<dbReference type="IntAct" id="P12036">
    <property type="interactions" value="43"/>
</dbReference>
<dbReference type="MINT" id="P12036"/>
<dbReference type="STRING" id="9606.ENSP00000311997"/>
<dbReference type="CarbonylDB" id="P12036"/>
<dbReference type="GlyCosmos" id="P12036">
    <property type="glycosylation" value="4 sites, 1 glycan"/>
</dbReference>
<dbReference type="GlyGen" id="P12036">
    <property type="glycosylation" value="11 sites, 1 O-linked glycan (10 sites)"/>
</dbReference>
<dbReference type="iPTMnet" id="P12036"/>
<dbReference type="PhosphoSitePlus" id="P12036"/>
<dbReference type="SwissPalm" id="P12036"/>
<dbReference type="BioMuta" id="NEFH"/>
<dbReference type="DMDM" id="226726294"/>
<dbReference type="jPOST" id="P12036"/>
<dbReference type="MassIVE" id="P12036"/>
<dbReference type="PaxDb" id="9606-ENSP00000311997"/>
<dbReference type="PeptideAtlas" id="P12036"/>
<dbReference type="ProteomicsDB" id="52821">
    <molecule id="P12036-1"/>
</dbReference>
<dbReference type="ProteomicsDB" id="52822">
    <molecule id="P12036-2"/>
</dbReference>
<dbReference type="Pumba" id="P12036"/>
<dbReference type="Antibodypedia" id="3579">
    <property type="antibodies" value="1738 antibodies from 47 providers"/>
</dbReference>
<dbReference type="DNASU" id="4744"/>
<dbReference type="Ensembl" id="ENST00000310624.7">
    <molecule id="P12036-1"/>
    <property type="protein sequence ID" value="ENSP00000311997.6"/>
    <property type="gene ID" value="ENSG00000100285.10"/>
</dbReference>
<dbReference type="GeneID" id="4744"/>
<dbReference type="KEGG" id="hsa:4744"/>
<dbReference type="MANE-Select" id="ENST00000310624.7">
    <property type="protein sequence ID" value="ENSP00000311997.6"/>
    <property type="RefSeq nucleotide sequence ID" value="NM_021076.4"/>
    <property type="RefSeq protein sequence ID" value="NP_066554.2"/>
</dbReference>
<dbReference type="UCSC" id="uc003afo.4">
    <molecule id="P12036-1"/>
    <property type="organism name" value="human"/>
</dbReference>
<dbReference type="AGR" id="HGNC:7737"/>
<dbReference type="CTD" id="4744"/>
<dbReference type="DisGeNET" id="4744"/>
<dbReference type="GeneCards" id="NEFH"/>
<dbReference type="GeneReviews" id="NEFH"/>
<dbReference type="HGNC" id="HGNC:7737">
    <property type="gene designation" value="NEFH"/>
</dbReference>
<dbReference type="HPA" id="ENSG00000100285">
    <property type="expression patterns" value="Group enriched (brain, prostate)"/>
</dbReference>
<dbReference type="MalaCards" id="NEFH"/>
<dbReference type="MIM" id="105400">
    <property type="type" value="phenotype"/>
</dbReference>
<dbReference type="MIM" id="162230">
    <property type="type" value="gene"/>
</dbReference>
<dbReference type="MIM" id="616924">
    <property type="type" value="phenotype"/>
</dbReference>
<dbReference type="neXtProt" id="NX_P12036"/>
<dbReference type="OpenTargets" id="ENSG00000100285"/>
<dbReference type="Orphanet" id="803">
    <property type="disease" value="Amyotrophic lateral sclerosis"/>
</dbReference>
<dbReference type="PharmGKB" id="PA31540"/>
<dbReference type="VEuPathDB" id="HostDB:ENSG00000100285"/>
<dbReference type="eggNOG" id="ENOG502QYDU">
    <property type="taxonomic scope" value="Eukaryota"/>
</dbReference>
<dbReference type="GeneTree" id="ENSGT00940000161893"/>
<dbReference type="HOGENOM" id="CLU_012560_7_2_1"/>
<dbReference type="InParanoid" id="P12036"/>
<dbReference type="OMA" id="FHSWTRT"/>
<dbReference type="OrthoDB" id="2441647at2759"/>
<dbReference type="PAN-GO" id="P12036">
    <property type="GO annotations" value="5 GO annotations based on evolutionary models"/>
</dbReference>
<dbReference type="PhylomeDB" id="P12036"/>
<dbReference type="TreeFam" id="TF330122"/>
<dbReference type="PathwayCommons" id="P12036"/>
<dbReference type="SignaLink" id="P12036"/>
<dbReference type="SIGNOR" id="P12036"/>
<dbReference type="BioGRID-ORCS" id="4744">
    <property type="hits" value="13 hits in 1154 CRISPR screens"/>
</dbReference>
<dbReference type="CD-CODE" id="232F8A39">
    <property type="entry name" value="P-body"/>
</dbReference>
<dbReference type="CD-CODE" id="FB4E32DD">
    <property type="entry name" value="Presynaptic clusters and postsynaptic densities"/>
</dbReference>
<dbReference type="ChiTaRS" id="NEFH">
    <property type="organism name" value="human"/>
</dbReference>
<dbReference type="GenomeRNAi" id="4744"/>
<dbReference type="Pharos" id="P12036">
    <property type="development level" value="Tbio"/>
</dbReference>
<dbReference type="PRO" id="PR:P12036"/>
<dbReference type="Proteomes" id="UP000005640">
    <property type="component" value="Chromosome 22"/>
</dbReference>
<dbReference type="RNAct" id="P12036">
    <property type="molecule type" value="protein"/>
</dbReference>
<dbReference type="Bgee" id="ENSG00000100285">
    <property type="expression patterns" value="Expressed in dorsal root ganglion and 163 other cell types or tissues"/>
</dbReference>
<dbReference type="GO" id="GO:0030424">
    <property type="term" value="C:axon"/>
    <property type="evidence" value="ECO:0000318"/>
    <property type="project" value="GO_Central"/>
</dbReference>
<dbReference type="GO" id="GO:0005737">
    <property type="term" value="C:cytoplasm"/>
    <property type="evidence" value="ECO:0000314"/>
    <property type="project" value="UniProtKB"/>
</dbReference>
<dbReference type="GO" id="GO:0005856">
    <property type="term" value="C:cytoskeleton"/>
    <property type="evidence" value="ECO:0000314"/>
    <property type="project" value="ARUK-UCL"/>
</dbReference>
<dbReference type="GO" id="GO:0097418">
    <property type="term" value="C:neurofibrillary tangle"/>
    <property type="evidence" value="ECO:0000314"/>
    <property type="project" value="BHF-UCL"/>
</dbReference>
<dbReference type="GO" id="GO:0005883">
    <property type="term" value="C:neurofilament"/>
    <property type="evidence" value="ECO:0000318"/>
    <property type="project" value="GO_Central"/>
</dbReference>
<dbReference type="GO" id="GO:0014069">
    <property type="term" value="C:postsynaptic density"/>
    <property type="evidence" value="ECO:0007669"/>
    <property type="project" value="Ensembl"/>
</dbReference>
<dbReference type="GO" id="GO:0099160">
    <property type="term" value="C:postsynaptic intermediate filament cytoskeleton"/>
    <property type="evidence" value="ECO:0007669"/>
    <property type="project" value="Ensembl"/>
</dbReference>
<dbReference type="GO" id="GO:0098685">
    <property type="term" value="C:Schaffer collateral - CA1 synapse"/>
    <property type="evidence" value="ECO:0007669"/>
    <property type="project" value="Ensembl"/>
</dbReference>
<dbReference type="GO" id="GO:0070840">
    <property type="term" value="F:dynein complex binding"/>
    <property type="evidence" value="ECO:0000304"/>
    <property type="project" value="BHF-UCL"/>
</dbReference>
<dbReference type="GO" id="GO:0019894">
    <property type="term" value="F:kinesin binding"/>
    <property type="evidence" value="ECO:0000304"/>
    <property type="project" value="BHF-UCL"/>
</dbReference>
<dbReference type="GO" id="GO:0008017">
    <property type="term" value="F:microtubule binding"/>
    <property type="evidence" value="ECO:0000304"/>
    <property type="project" value="BHF-UCL"/>
</dbReference>
<dbReference type="GO" id="GO:0019901">
    <property type="term" value="F:protein kinase binding"/>
    <property type="evidence" value="ECO:0000353"/>
    <property type="project" value="ARUK-UCL"/>
</dbReference>
<dbReference type="GO" id="GO:0030674">
    <property type="term" value="F:protein-macromolecule adaptor activity"/>
    <property type="evidence" value="ECO:0000250"/>
    <property type="project" value="BHF-UCL"/>
</dbReference>
<dbReference type="GO" id="GO:0005200">
    <property type="term" value="F:structural constituent of cytoskeleton"/>
    <property type="evidence" value="ECO:0000315"/>
    <property type="project" value="BHF-UCL"/>
</dbReference>
<dbReference type="GO" id="GO:0099184">
    <property type="term" value="F:structural constituent of postsynaptic intermediate filament cytoskeleton"/>
    <property type="evidence" value="ECO:0000318"/>
    <property type="project" value="GO_Central"/>
</dbReference>
<dbReference type="GO" id="GO:0061564">
    <property type="term" value="P:axon development"/>
    <property type="evidence" value="ECO:0000315"/>
    <property type="project" value="BHF-UCL"/>
</dbReference>
<dbReference type="GO" id="GO:0007409">
    <property type="term" value="P:axonogenesis"/>
    <property type="evidence" value="ECO:0000304"/>
    <property type="project" value="BHF-UCL"/>
</dbReference>
<dbReference type="GO" id="GO:0030031">
    <property type="term" value="P:cell projection assembly"/>
    <property type="evidence" value="ECO:0000304"/>
    <property type="project" value="BHF-UCL"/>
</dbReference>
<dbReference type="GO" id="GO:1990830">
    <property type="term" value="P:cellular response to leukemia inhibitory factor"/>
    <property type="evidence" value="ECO:0007669"/>
    <property type="project" value="Ensembl"/>
</dbReference>
<dbReference type="GO" id="GO:0045110">
    <property type="term" value="P:intermediate filament bundle assembly"/>
    <property type="evidence" value="ECO:0000318"/>
    <property type="project" value="GO_Central"/>
</dbReference>
<dbReference type="GO" id="GO:0000226">
    <property type="term" value="P:microtubule cytoskeleton organization"/>
    <property type="evidence" value="ECO:0007669"/>
    <property type="project" value="Ensembl"/>
</dbReference>
<dbReference type="GO" id="GO:0033693">
    <property type="term" value="P:neurofilament bundle assembly"/>
    <property type="evidence" value="ECO:0000315"/>
    <property type="project" value="BHF-UCL"/>
</dbReference>
<dbReference type="GO" id="GO:0060052">
    <property type="term" value="P:neurofilament cytoskeleton organization"/>
    <property type="evidence" value="ECO:0007669"/>
    <property type="project" value="Ensembl"/>
</dbReference>
<dbReference type="GO" id="GO:0048936">
    <property type="term" value="P:peripheral nervous system neuron axonogenesis"/>
    <property type="evidence" value="ECO:0007669"/>
    <property type="project" value="Ensembl"/>
</dbReference>
<dbReference type="GO" id="GO:0099170">
    <property type="term" value="P:postsynaptic modulation of chemical synaptic transmission"/>
    <property type="evidence" value="ECO:0007669"/>
    <property type="project" value="Ensembl"/>
</dbReference>
<dbReference type="GO" id="GO:1902513">
    <property type="term" value="P:regulation of organelle transport along microtubule"/>
    <property type="evidence" value="ECO:0000315"/>
    <property type="project" value="BHF-UCL"/>
</dbReference>
<dbReference type="FunFam" id="1.20.5.1160:FF:000010">
    <property type="entry name" value="neurofilament heavy polypeptide"/>
    <property type="match status" value="1"/>
</dbReference>
<dbReference type="FunFam" id="1.20.5.170:FF:000002">
    <property type="entry name" value="Type I keratin KA11"/>
    <property type="match status" value="1"/>
</dbReference>
<dbReference type="Gene3D" id="1.20.5.170">
    <property type="match status" value="1"/>
</dbReference>
<dbReference type="Gene3D" id="1.20.5.500">
    <property type="entry name" value="Single helix bin"/>
    <property type="match status" value="1"/>
</dbReference>
<dbReference type="Gene3D" id="1.20.5.1160">
    <property type="entry name" value="Vasodilator-stimulated phosphoprotein"/>
    <property type="match status" value="1"/>
</dbReference>
<dbReference type="InterPro" id="IPR010790">
    <property type="entry name" value="DUF1388"/>
</dbReference>
<dbReference type="InterPro" id="IPR018039">
    <property type="entry name" value="IF_conserved"/>
</dbReference>
<dbReference type="InterPro" id="IPR039008">
    <property type="entry name" value="IF_rod_dom"/>
</dbReference>
<dbReference type="PANTHER" id="PTHR23214:SF1">
    <property type="entry name" value="NEUROFILAMENT HEAVY POLYPEPTIDE"/>
    <property type="match status" value="1"/>
</dbReference>
<dbReference type="PANTHER" id="PTHR23214">
    <property type="entry name" value="NEUROFILAMENT TRIPLET H PROTEIN"/>
    <property type="match status" value="1"/>
</dbReference>
<dbReference type="Pfam" id="PF07142">
    <property type="entry name" value="DUF1388"/>
    <property type="match status" value="2"/>
</dbReference>
<dbReference type="Pfam" id="PF00038">
    <property type="entry name" value="Filament"/>
    <property type="match status" value="1"/>
</dbReference>
<dbReference type="SMART" id="SM01391">
    <property type="entry name" value="Filament"/>
    <property type="match status" value="1"/>
</dbReference>
<dbReference type="SUPFAM" id="SSF64593">
    <property type="entry name" value="Intermediate filament protein, coiled coil region"/>
    <property type="match status" value="2"/>
</dbReference>
<dbReference type="PROSITE" id="PS00226">
    <property type="entry name" value="IF_ROD_1"/>
    <property type="match status" value="1"/>
</dbReference>
<dbReference type="PROSITE" id="PS51842">
    <property type="entry name" value="IF_ROD_2"/>
    <property type="match status" value="1"/>
</dbReference>
<feature type="chain" id="PRO_0000063800" description="Neurofilament heavy polypeptide">
    <location>
        <begin position="1"/>
        <end position="1020"/>
    </location>
</feature>
<feature type="domain" description="IF rod" evidence="3">
    <location>
        <begin position="97"/>
        <end position="413"/>
    </location>
</feature>
<feature type="repeat" description="1">
    <location>
        <begin position="525"/>
        <end position="530"/>
    </location>
</feature>
<feature type="repeat" description="2">
    <location>
        <begin position="531"/>
        <end position="536"/>
    </location>
</feature>
<feature type="repeat" description="3">
    <location>
        <begin position="539"/>
        <end position="544"/>
    </location>
</feature>
<feature type="repeat" description="4">
    <location>
        <begin position="545"/>
        <end position="550"/>
    </location>
</feature>
<feature type="repeat" description="5">
    <location>
        <begin position="559"/>
        <end position="564"/>
    </location>
</feature>
<feature type="repeat" description="6">
    <location>
        <begin position="573"/>
        <end position="578"/>
    </location>
</feature>
<feature type="repeat" description="7">
    <location>
        <begin position="579"/>
        <end position="584"/>
    </location>
</feature>
<feature type="repeat" description="8">
    <location>
        <begin position="593"/>
        <end position="598"/>
    </location>
</feature>
<feature type="repeat" description="9">
    <location>
        <begin position="599"/>
        <end position="604"/>
    </location>
</feature>
<feature type="repeat" description="10">
    <location>
        <begin position="613"/>
        <end position="618"/>
    </location>
</feature>
<feature type="repeat" description="11">
    <location>
        <begin position="627"/>
        <end position="632"/>
    </location>
</feature>
<feature type="repeat" description="12">
    <location>
        <begin position="633"/>
        <end position="638"/>
    </location>
</feature>
<feature type="repeat" description="13">
    <location>
        <begin position="639"/>
        <end position="644"/>
    </location>
</feature>
<feature type="repeat" description="14">
    <location>
        <begin position="647"/>
        <end position="652"/>
    </location>
</feature>
<feature type="repeat" description="15">
    <location>
        <begin position="661"/>
        <end position="666"/>
    </location>
</feature>
<feature type="repeat" description="16">
    <location>
        <begin position="667"/>
        <end position="672"/>
    </location>
</feature>
<feature type="repeat" description="17">
    <location>
        <begin position="675"/>
        <end position="680"/>
    </location>
</feature>
<feature type="repeat" description="18">
    <location>
        <begin position="681"/>
        <end position="686"/>
    </location>
</feature>
<feature type="repeat" description="19">
    <location>
        <begin position="689"/>
        <end position="694"/>
    </location>
</feature>
<feature type="repeat" description="20">
    <location>
        <begin position="695"/>
        <end position="700"/>
    </location>
</feature>
<feature type="repeat" description="21">
    <location>
        <begin position="703"/>
        <end position="708"/>
    </location>
</feature>
<feature type="repeat" description="22">
    <location>
        <begin position="709"/>
        <end position="714"/>
    </location>
</feature>
<feature type="repeat" description="23">
    <location>
        <begin position="717"/>
        <end position="722"/>
    </location>
</feature>
<feature type="repeat" description="24">
    <location>
        <begin position="723"/>
        <end position="728"/>
    </location>
</feature>
<feature type="repeat" description="25">
    <location>
        <begin position="737"/>
        <end position="742"/>
    </location>
</feature>
<feature type="repeat" description="26">
    <location>
        <begin position="745"/>
        <end position="750"/>
    </location>
</feature>
<feature type="repeat" description="27">
    <location>
        <begin position="762"/>
        <end position="767"/>
    </location>
</feature>
<feature type="repeat" description="28">
    <location>
        <begin position="786"/>
        <end position="791"/>
    </location>
</feature>
<feature type="repeat" description="29">
    <location>
        <begin position="794"/>
        <end position="799"/>
    </location>
</feature>
<feature type="repeat" description="30">
    <location>
        <begin position="821"/>
        <end position="826"/>
    </location>
</feature>
<feature type="region of interest" description="Head">
    <location>
        <begin position="1"/>
        <end position="100"/>
    </location>
</feature>
<feature type="region of interest" description="Disordered" evidence="4">
    <location>
        <begin position="58"/>
        <end position="83"/>
    </location>
</feature>
<feature type="region of interest" description="Coil 1A">
    <location>
        <begin position="101"/>
        <end position="132"/>
    </location>
</feature>
<feature type="region of interest" description="Linker 1">
    <location>
        <begin position="133"/>
        <end position="145"/>
    </location>
</feature>
<feature type="region of interest" description="Coil 1B">
    <location>
        <begin position="146"/>
        <end position="244"/>
    </location>
</feature>
<feature type="region of interest" description="Linker 12">
    <location>
        <begin position="245"/>
        <end position="266"/>
    </location>
</feature>
<feature type="region of interest" description="Coil 2A">
    <location>
        <begin position="267"/>
        <end position="288"/>
    </location>
</feature>
<feature type="region of interest" description="Linker 2">
    <location>
        <begin position="289"/>
        <end position="292"/>
    </location>
</feature>
<feature type="region of interest" description="Coil 2B">
    <location>
        <begin position="293"/>
        <end position="413"/>
    </location>
</feature>
<feature type="region of interest" description="Tail">
    <location>
        <begin position="414"/>
        <end position="1020"/>
    </location>
</feature>
<feature type="region of interest" description="Disordered" evidence="4">
    <location>
        <begin position="456"/>
        <end position="1020"/>
    </location>
</feature>
<feature type="region of interest" description="30 X 6 AA repeats of K-S-P-[AEPV]-[EAK]-[AEVK]">
    <location>
        <begin position="525"/>
        <end position="826"/>
    </location>
</feature>
<feature type="compositionally biased region" description="Polar residues" evidence="4">
    <location>
        <begin position="71"/>
        <end position="82"/>
    </location>
</feature>
<feature type="compositionally biased region" description="Acidic residues" evidence="4">
    <location>
        <begin position="459"/>
        <end position="475"/>
    </location>
</feature>
<feature type="compositionally biased region" description="Acidic residues" evidence="4">
    <location>
        <begin position="483"/>
        <end position="498"/>
    </location>
</feature>
<feature type="compositionally biased region" description="Basic and acidic residues" evidence="4">
    <location>
        <begin position="511"/>
        <end position="1020"/>
    </location>
</feature>
<feature type="modified residue" description="Phosphoserine" evidence="2">
    <location>
        <position position="76"/>
    </location>
</feature>
<feature type="modified residue" description="Phosphoserine" evidence="2">
    <location>
        <position position="124"/>
    </location>
</feature>
<feature type="modified residue" description="Phosphoserine" evidence="1">
    <location>
        <position position="347"/>
    </location>
</feature>
<feature type="modified residue" description="Phosphoserine" evidence="2">
    <location>
        <position position="421"/>
    </location>
</feature>
<feature type="modified residue" description="Phosphoserine" evidence="1">
    <location>
        <position position="511"/>
    </location>
</feature>
<feature type="modified residue" description="Phosphoserine" evidence="1">
    <location>
        <position position="526"/>
    </location>
</feature>
<feature type="modified residue" description="Phosphoserine" evidence="2">
    <location>
        <position position="532"/>
    </location>
</feature>
<feature type="modified residue" description="Phosphoserine" evidence="11">
    <location>
        <position position="540"/>
    </location>
</feature>
<feature type="modified residue" description="Phosphoserine" evidence="2">
    <location>
        <position position="546"/>
    </location>
</feature>
<feature type="modified residue" description="Phosphoserine" evidence="2">
    <location>
        <position position="552"/>
    </location>
</feature>
<feature type="modified residue" description="Phosphoserine" evidence="2">
    <location>
        <position position="560"/>
    </location>
</feature>
<feature type="modified residue" description="Phosphoserine" evidence="2">
    <location>
        <position position="566"/>
    </location>
</feature>
<feature type="modified residue" description="Phosphoserine" evidence="11">
    <location>
        <position position="574"/>
    </location>
</feature>
<feature type="modified residue" description="Phosphoserine" evidence="2">
    <location>
        <position position="580"/>
    </location>
</feature>
<feature type="modified residue" description="Phosphoserine" evidence="2">
    <location>
        <position position="586"/>
    </location>
</feature>
<feature type="modified residue" description="Phosphoserine" evidence="2">
    <location>
        <position position="594"/>
    </location>
</feature>
<feature type="modified residue" description="Phosphoserine" evidence="2">
    <location>
        <position position="600"/>
    </location>
</feature>
<feature type="modified residue" description="Phosphoserine" evidence="2">
    <location>
        <position position="606"/>
    </location>
</feature>
<feature type="modified residue" description="Phosphoserine" evidence="2">
    <location>
        <position position="614"/>
    </location>
</feature>
<feature type="modified residue" description="Phosphoserine" evidence="2">
    <location>
        <position position="620"/>
    </location>
</feature>
<feature type="modified residue" description="Phosphoserine" evidence="11">
    <location>
        <position position="628"/>
    </location>
</feature>
<feature type="modified residue" description="Phosphoserine" evidence="2">
    <location>
        <position position="634"/>
    </location>
</feature>
<feature type="modified residue" description="Phosphoserine" evidence="2">
    <location>
        <position position="640"/>
    </location>
</feature>
<feature type="modified residue" description="Phosphoserine" evidence="2">
    <location>
        <position position="648"/>
    </location>
</feature>
<feature type="modified residue" description="Phosphoserine" evidence="2">
    <location>
        <position position="654"/>
    </location>
</feature>
<feature type="modified residue" description="Phosphoserine" evidence="1">
    <location>
        <position position="662"/>
    </location>
</feature>
<feature type="modified residue" description="Phosphoserine" evidence="11">
    <location>
        <position position="668"/>
    </location>
</feature>
<feature type="modified residue" description="Phosphoserine" evidence="2">
    <location>
        <position position="676"/>
    </location>
</feature>
<feature type="modified residue" description="Phosphoserine" evidence="11">
    <location>
        <position position="682"/>
    </location>
</feature>
<feature type="modified residue" description="Phosphoserine" evidence="2">
    <location>
        <position position="690"/>
    </location>
</feature>
<feature type="modified residue" description="Phosphoserine" evidence="2">
    <location>
        <position position="696"/>
    </location>
</feature>
<feature type="modified residue" description="Phosphoserine" evidence="2">
    <location>
        <position position="704"/>
    </location>
</feature>
<feature type="modified residue" description="Phosphoserine" evidence="2">
    <location>
        <position position="718"/>
    </location>
</feature>
<feature type="modified residue" description="Phosphoserine" evidence="2">
    <location>
        <position position="724"/>
    </location>
</feature>
<feature type="modified residue" description="Phosphoserine" evidence="1">
    <location>
        <position position="738"/>
    </location>
</feature>
<feature type="modified residue" description="Phosphoserine" evidence="1">
    <location>
        <position position="752"/>
    </location>
</feature>
<feature type="modified residue" description="Phosphoserine" evidence="2">
    <location>
        <position position="763"/>
    </location>
</feature>
<feature type="modified residue" description="Phosphothreonine" evidence="1">
    <location>
        <position position="768"/>
    </location>
</feature>
<feature type="modified residue" description="Phosphoserine" evidence="2">
    <location>
        <position position="787"/>
    </location>
</feature>
<feature type="modified residue" description="Phosphoserine" evidence="2">
    <location>
        <position position="795"/>
    </location>
</feature>
<feature type="modified residue" description="Phosphoserine" evidence="2">
    <location>
        <position position="822"/>
    </location>
</feature>
<feature type="modified residue" description="Phosphoserine" evidence="1">
    <location>
        <position position="888"/>
    </location>
</feature>
<feature type="splice variant" id="VSP_036706" description="In isoform 2." evidence="9">
    <location>
        <begin position="744"/>
        <end position="806"/>
    </location>
</feature>
<feature type="sequence variant" id="VAR_054787" description="In dbSNP:rs6006164.">
    <original>P</original>
    <variation>S</variation>
    <location>
        <position position="575"/>
    </location>
</feature>
<feature type="sequence variant" id="VAR_056025" description="In dbSNP:rs5763269.">
    <original>P</original>
    <variation>L</variation>
    <location>
        <position position="615"/>
    </location>
</feature>
<feature type="sequence variant" id="VAR_088859" description="In dbSNP:rs147489453." evidence="6">
    <original>E</original>
    <variation>EAKSPEK</variation>
    <location>
        <position position="645"/>
    </location>
</feature>
<feature type="sequence variant" id="VAR_023063" description="In ALS; dbSNP:rs59551486." evidence="7">
    <location>
        <position position="790"/>
    </location>
</feature>
<feature type="sequence variant" id="VAR_026163" description="In dbSNP:rs165602." evidence="6">
    <original>E</original>
    <variation>A</variation>
    <location>
        <position position="805"/>
    </location>
</feature>
<name>NFH_HUMAN</name>
<sequence length="1020" mass="111838">MMSFGGADALLGAPFAPLHGGGSLHYALARKGGAGGTRSAAGSSSGFHSWTRTSVSSVSASPSRFRGAGAASSTDSLDTLSNGPEGCMVAVATSRSEKEQLQALNDRFAGYIDKVRQLEAHNRSLEGEAAALRQQQAGRSAMGELYEREVREMRGAVLRLGAARGQLRLEQEHLLEDIAHVRQRLDDEARQREEAEAAARALARFAQEAEAARVDLQKKAQALQEECGYLRRHHQEEVGELLGQIQGSGAAQAQMQAETRDALKCDVTSALREIRAQLEGHAVQSTLQSEEWFRVRLDRLSEAAKVNTDAMRSAQEEITEYRRQLQARTTELEALKSTKDSLERQRSELEDRHQADIASYQEAIQQLDAELRNTKWEMAAQLREYQDLLNVKMALDIEIAAYRKLLEGEECRIGFGPIPFSLPEGLPKIPSVSTHIKVKSEEKIKVVEKSEKETVIVEEQTEETQVTEEVTEEEEKEAKEEEGKEEEGGEEEEAEGGEEETKSPPAEEAASPEKEAKSPVKEEAKSPAEAKSPEKEEAKSPAEVKSPEKAKSPAKEEAKSPPEAKSPEKEEAKSPAEVKSPEKAKSPAKEEAKSPAEAKSPEKAKSPVKEEAKSPAEAKSPVKEEAKSPAEVKSPEKAKSPTKEEAKSPEKAKSPEKEEAKSPEKAKSPVKAEAKSPEKAKSPVKAEAKSPEKAKSPVKEEAKSPEKAKSPVKEEAKSPEKAKSPVKEEAKTPEKAKSPVKEEAKSPEKAKSPEKAKTLDVKSPEAKTPAKEEARSPADKFPEKAKSPVKEEVKSPEKAKSPLKEDAKAPEKEIPKKEEVKSPVKEEEKPQEVKVKEPPKKAEEEKAPATPKTEEKKDSKKEEAPKKEAPKPKVEEKKEPAVEKPKESKVEAKKEEAEDKKKVPTPEKEAPAKVEVKEDAKPKEKTEVAKKEPDDAKAKEPSKPAEKKEAAPEKKDTKEEKAKKPEEKPKTEAKAKEDDKTLSKEPSKPKAEKAEKSSSTDQKDSKPPEKATEDKAAKGK</sequence>
<reference key="1">
    <citation type="journal article" date="1988" name="EMBO J.">
        <title>The structure and organization of the human heavy neurofilament subunit (NF-H) and the gene encoding it.</title>
        <authorList>
            <person name="Lees J.F."/>
            <person name="Shneidman P.S."/>
            <person name="Skuntz S.F."/>
            <person name="Carden M.J."/>
            <person name="Lazzarini R.A."/>
        </authorList>
    </citation>
    <scope>NUCLEOTIDE SEQUENCE [GENOMIC DNA]</scope>
    <scope>VARIANT ALA-805</scope>
</reference>
<reference key="2">
    <citation type="journal article" date="1999" name="Beijing Yi Ke Da Xue Xue Bao">
        <title>Molecular Cloning of human hSTE cDNA.</title>
        <authorList>
            <person name="Zhu Y."/>
            <person name="Han Y."/>
        </authorList>
    </citation>
    <scope>NUCLEOTIDE SEQUENCE [MRNA] (ISOFORM 1)</scope>
    <scope>VARIANT ALA-LYS-SER-PRO-GLU-LYS-645 INS</scope>
</reference>
<reference key="3">
    <citation type="journal article" date="1998" name="DNA Res.">
        <title>Prediction of the coding sequences of unidentified human genes. XII. The complete sequences of 100 new cDNA clones from brain which code for large proteins in vitro.</title>
        <authorList>
            <person name="Nagase T."/>
            <person name="Ishikawa K."/>
            <person name="Suyama M."/>
            <person name="Kikuno R."/>
            <person name="Hirosawa M."/>
            <person name="Miyajima N."/>
            <person name="Tanaka A."/>
            <person name="Kotani H."/>
            <person name="Nomura N."/>
            <person name="Ohara O."/>
        </authorList>
    </citation>
    <scope>NUCLEOTIDE SEQUENCE [LARGE SCALE MRNA] (ISOFORM 1)</scope>
    <scope>VARIANT ALA-LYS-SER-PRO-GLU-LYS-645 INS</scope>
    <source>
        <tissue>Brain</tissue>
    </source>
</reference>
<reference key="4">
    <citation type="journal article" date="2004" name="Nat. Genet.">
        <title>Complete sequencing and characterization of 21,243 full-length human cDNAs.</title>
        <authorList>
            <person name="Ota T."/>
            <person name="Suzuki Y."/>
            <person name="Nishikawa T."/>
            <person name="Otsuki T."/>
            <person name="Sugiyama T."/>
            <person name="Irie R."/>
            <person name="Wakamatsu A."/>
            <person name="Hayashi K."/>
            <person name="Sato H."/>
            <person name="Nagai K."/>
            <person name="Kimura K."/>
            <person name="Makita H."/>
            <person name="Sekine M."/>
            <person name="Obayashi M."/>
            <person name="Nishi T."/>
            <person name="Shibahara T."/>
            <person name="Tanaka T."/>
            <person name="Ishii S."/>
            <person name="Yamamoto J."/>
            <person name="Saito K."/>
            <person name="Kawai Y."/>
            <person name="Isono Y."/>
            <person name="Nakamura Y."/>
            <person name="Nagahari K."/>
            <person name="Murakami K."/>
            <person name="Yasuda T."/>
            <person name="Iwayanagi T."/>
            <person name="Wagatsuma M."/>
            <person name="Shiratori A."/>
            <person name="Sudo H."/>
            <person name="Hosoiri T."/>
            <person name="Kaku Y."/>
            <person name="Kodaira H."/>
            <person name="Kondo H."/>
            <person name="Sugawara M."/>
            <person name="Takahashi M."/>
            <person name="Kanda K."/>
            <person name="Yokoi T."/>
            <person name="Furuya T."/>
            <person name="Kikkawa E."/>
            <person name="Omura Y."/>
            <person name="Abe K."/>
            <person name="Kamihara K."/>
            <person name="Katsuta N."/>
            <person name="Sato K."/>
            <person name="Tanikawa M."/>
            <person name="Yamazaki M."/>
            <person name="Ninomiya K."/>
            <person name="Ishibashi T."/>
            <person name="Yamashita H."/>
            <person name="Murakawa K."/>
            <person name="Fujimori K."/>
            <person name="Tanai H."/>
            <person name="Kimata M."/>
            <person name="Watanabe M."/>
            <person name="Hiraoka S."/>
            <person name="Chiba Y."/>
            <person name="Ishida S."/>
            <person name="Ono Y."/>
            <person name="Takiguchi S."/>
            <person name="Watanabe S."/>
            <person name="Yosida M."/>
            <person name="Hotuta T."/>
            <person name="Kusano J."/>
            <person name="Kanehori K."/>
            <person name="Takahashi-Fujii A."/>
            <person name="Hara H."/>
            <person name="Tanase T.-O."/>
            <person name="Nomura Y."/>
            <person name="Togiya S."/>
            <person name="Komai F."/>
            <person name="Hara R."/>
            <person name="Takeuchi K."/>
            <person name="Arita M."/>
            <person name="Imose N."/>
            <person name="Musashino K."/>
            <person name="Yuuki H."/>
            <person name="Oshima A."/>
            <person name="Sasaki N."/>
            <person name="Aotsuka S."/>
            <person name="Yoshikawa Y."/>
            <person name="Matsunawa H."/>
            <person name="Ichihara T."/>
            <person name="Shiohata N."/>
            <person name="Sano S."/>
            <person name="Moriya S."/>
            <person name="Momiyama H."/>
            <person name="Satoh N."/>
            <person name="Takami S."/>
            <person name="Terashima Y."/>
            <person name="Suzuki O."/>
            <person name="Nakagawa S."/>
            <person name="Senoh A."/>
            <person name="Mizoguchi H."/>
            <person name="Goto Y."/>
            <person name="Shimizu F."/>
            <person name="Wakebe H."/>
            <person name="Hishigaki H."/>
            <person name="Watanabe T."/>
            <person name="Sugiyama A."/>
            <person name="Takemoto M."/>
            <person name="Kawakami B."/>
            <person name="Yamazaki M."/>
            <person name="Watanabe K."/>
            <person name="Kumagai A."/>
            <person name="Itakura S."/>
            <person name="Fukuzumi Y."/>
            <person name="Fujimori Y."/>
            <person name="Komiyama M."/>
            <person name="Tashiro H."/>
            <person name="Tanigami A."/>
            <person name="Fujiwara T."/>
            <person name="Ono T."/>
            <person name="Yamada K."/>
            <person name="Fujii Y."/>
            <person name="Ozaki K."/>
            <person name="Hirao M."/>
            <person name="Ohmori Y."/>
            <person name="Kawabata A."/>
            <person name="Hikiji T."/>
            <person name="Kobatake N."/>
            <person name="Inagaki H."/>
            <person name="Ikema Y."/>
            <person name="Okamoto S."/>
            <person name="Okitani R."/>
            <person name="Kawakami T."/>
            <person name="Noguchi S."/>
            <person name="Itoh T."/>
            <person name="Shigeta K."/>
            <person name="Senba T."/>
            <person name="Matsumura K."/>
            <person name="Nakajima Y."/>
            <person name="Mizuno T."/>
            <person name="Morinaga M."/>
            <person name="Sasaki M."/>
            <person name="Togashi T."/>
            <person name="Oyama M."/>
            <person name="Hata H."/>
            <person name="Watanabe M."/>
            <person name="Komatsu T."/>
            <person name="Mizushima-Sugano J."/>
            <person name="Satoh T."/>
            <person name="Shirai Y."/>
            <person name="Takahashi Y."/>
            <person name="Nakagawa K."/>
            <person name="Okumura K."/>
            <person name="Nagase T."/>
            <person name="Nomura N."/>
            <person name="Kikuchi H."/>
            <person name="Masuho Y."/>
            <person name="Yamashita R."/>
            <person name="Nakai K."/>
            <person name="Yada T."/>
            <person name="Nakamura Y."/>
            <person name="Ohara O."/>
            <person name="Isogai T."/>
            <person name="Sugano S."/>
        </authorList>
    </citation>
    <scope>NUCLEOTIDE SEQUENCE [LARGE SCALE MRNA] (ISOFORM 1)</scope>
    <scope>VARIANT ALA-LYS-SER-PRO-GLU-LYS-645 INS</scope>
    <source>
        <tissue>Testis</tissue>
    </source>
</reference>
<reference key="5">
    <citation type="journal article" date="1999" name="Nature">
        <title>The DNA sequence of human chromosome 22.</title>
        <authorList>
            <person name="Dunham I."/>
            <person name="Hunt A.R."/>
            <person name="Collins J.E."/>
            <person name="Bruskiewich R."/>
            <person name="Beare D.M."/>
            <person name="Clamp M."/>
            <person name="Smink L.J."/>
            <person name="Ainscough R."/>
            <person name="Almeida J.P."/>
            <person name="Babbage A.K."/>
            <person name="Bagguley C."/>
            <person name="Bailey J."/>
            <person name="Barlow K.F."/>
            <person name="Bates K.N."/>
            <person name="Beasley O.P."/>
            <person name="Bird C.P."/>
            <person name="Blakey S.E."/>
            <person name="Bridgeman A.M."/>
            <person name="Buck D."/>
            <person name="Burgess J."/>
            <person name="Burrill W.D."/>
            <person name="Burton J."/>
            <person name="Carder C."/>
            <person name="Carter N.P."/>
            <person name="Chen Y."/>
            <person name="Clark G."/>
            <person name="Clegg S.M."/>
            <person name="Cobley V.E."/>
            <person name="Cole C.G."/>
            <person name="Collier R.E."/>
            <person name="Connor R."/>
            <person name="Conroy D."/>
            <person name="Corby N.R."/>
            <person name="Coville G.J."/>
            <person name="Cox A.V."/>
            <person name="Davis J."/>
            <person name="Dawson E."/>
            <person name="Dhami P.D."/>
            <person name="Dockree C."/>
            <person name="Dodsworth S.J."/>
            <person name="Durbin R.M."/>
            <person name="Ellington A.G."/>
            <person name="Evans K.L."/>
            <person name="Fey J.M."/>
            <person name="Fleming K."/>
            <person name="French L."/>
            <person name="Garner A.A."/>
            <person name="Gilbert J.G.R."/>
            <person name="Goward M.E."/>
            <person name="Grafham D.V."/>
            <person name="Griffiths M.N.D."/>
            <person name="Hall C."/>
            <person name="Hall R.E."/>
            <person name="Hall-Tamlyn G."/>
            <person name="Heathcott R.W."/>
            <person name="Ho S."/>
            <person name="Holmes S."/>
            <person name="Hunt S.E."/>
            <person name="Jones M.C."/>
            <person name="Kershaw J."/>
            <person name="Kimberley A.M."/>
            <person name="King A."/>
            <person name="Laird G.K."/>
            <person name="Langford C.F."/>
            <person name="Leversha M.A."/>
            <person name="Lloyd C."/>
            <person name="Lloyd D.M."/>
            <person name="Martyn I.D."/>
            <person name="Mashreghi-Mohammadi M."/>
            <person name="Matthews L.H."/>
            <person name="Mccann O.T."/>
            <person name="Mcclay J."/>
            <person name="Mclaren S."/>
            <person name="McMurray A.A."/>
            <person name="Milne S.A."/>
            <person name="Mortimore B.J."/>
            <person name="Odell C.N."/>
            <person name="Pavitt R."/>
            <person name="Pearce A.V."/>
            <person name="Pearson D."/>
            <person name="Phillimore B.J.C.T."/>
            <person name="Phillips S.H."/>
            <person name="Plumb R.W."/>
            <person name="Ramsay H."/>
            <person name="Ramsey Y."/>
            <person name="Rogers L."/>
            <person name="Ross M.T."/>
            <person name="Scott C.E."/>
            <person name="Sehra H.K."/>
            <person name="Skuce C.D."/>
            <person name="Smalley S."/>
            <person name="Smith M.L."/>
            <person name="Soderlund C."/>
            <person name="Spragon L."/>
            <person name="Steward C.A."/>
            <person name="Sulston J.E."/>
            <person name="Swann R.M."/>
            <person name="Vaudin M."/>
            <person name="Wall M."/>
            <person name="Wallis J.M."/>
            <person name="Whiteley M.N."/>
            <person name="Willey D.L."/>
            <person name="Williams L."/>
            <person name="Williams S.A."/>
            <person name="Williamson H."/>
            <person name="Wilmer T.E."/>
            <person name="Wilming L."/>
            <person name="Wright C.L."/>
            <person name="Hubbard T."/>
            <person name="Bentley D.R."/>
            <person name="Beck S."/>
            <person name="Rogers J."/>
            <person name="Shimizu N."/>
            <person name="Minoshima S."/>
            <person name="Kawasaki K."/>
            <person name="Sasaki T."/>
            <person name="Asakawa S."/>
            <person name="Kudoh J."/>
            <person name="Shintani A."/>
            <person name="Shibuya K."/>
            <person name="Yoshizaki Y."/>
            <person name="Aoki N."/>
            <person name="Mitsuyama S."/>
            <person name="Roe B.A."/>
            <person name="Chen F."/>
            <person name="Chu L."/>
            <person name="Crabtree J."/>
            <person name="Deschamps S."/>
            <person name="Do A."/>
            <person name="Do T."/>
            <person name="Dorman A."/>
            <person name="Fang F."/>
            <person name="Fu Y."/>
            <person name="Hu P."/>
            <person name="Hua A."/>
            <person name="Kenton S."/>
            <person name="Lai H."/>
            <person name="Lao H.I."/>
            <person name="Lewis J."/>
            <person name="Lewis S."/>
            <person name="Lin S.-P."/>
            <person name="Loh P."/>
            <person name="Malaj E."/>
            <person name="Nguyen T."/>
            <person name="Pan H."/>
            <person name="Phan S."/>
            <person name="Qi S."/>
            <person name="Qian Y."/>
            <person name="Ray L."/>
            <person name="Ren Q."/>
            <person name="Shaull S."/>
            <person name="Sloan D."/>
            <person name="Song L."/>
            <person name="Wang Q."/>
            <person name="Wang Y."/>
            <person name="Wang Z."/>
            <person name="White J."/>
            <person name="Willingham D."/>
            <person name="Wu H."/>
            <person name="Yao Z."/>
            <person name="Zhan M."/>
            <person name="Zhang G."/>
            <person name="Chissoe S."/>
            <person name="Murray J."/>
            <person name="Miller N."/>
            <person name="Minx P."/>
            <person name="Fulton R."/>
            <person name="Johnson D."/>
            <person name="Bemis G."/>
            <person name="Bentley D."/>
            <person name="Bradshaw H."/>
            <person name="Bourne S."/>
            <person name="Cordes M."/>
            <person name="Du Z."/>
            <person name="Fulton L."/>
            <person name="Goela D."/>
            <person name="Graves T."/>
            <person name="Hawkins J."/>
            <person name="Hinds K."/>
            <person name="Kemp K."/>
            <person name="Latreille P."/>
            <person name="Layman D."/>
            <person name="Ozersky P."/>
            <person name="Rohlfing T."/>
            <person name="Scheet P."/>
            <person name="Walker C."/>
            <person name="Wamsley A."/>
            <person name="Wohldmann P."/>
            <person name="Pepin K."/>
            <person name="Nelson J."/>
            <person name="Korf I."/>
            <person name="Bedell J.A."/>
            <person name="Hillier L.W."/>
            <person name="Mardis E."/>
            <person name="Waterston R."/>
            <person name="Wilson R."/>
            <person name="Emanuel B.S."/>
            <person name="Shaikh T."/>
            <person name="Kurahashi H."/>
            <person name="Saitta S."/>
            <person name="Budarf M.L."/>
            <person name="McDermid H.E."/>
            <person name="Johnson A."/>
            <person name="Wong A.C.C."/>
            <person name="Morrow B.E."/>
            <person name="Edelmann L."/>
            <person name="Kim U.J."/>
            <person name="Shizuya H."/>
            <person name="Simon M.I."/>
            <person name="Dumanski J.P."/>
            <person name="Peyrard M."/>
            <person name="Kedra D."/>
            <person name="Seroussi E."/>
            <person name="Fransson I."/>
            <person name="Tapia I."/>
            <person name="Bruder C.E."/>
            <person name="O'Brien K.P."/>
            <person name="Wilkinson P."/>
            <person name="Bodenteich A."/>
            <person name="Hartman K."/>
            <person name="Hu X."/>
            <person name="Khan A.S."/>
            <person name="Lane L."/>
            <person name="Tilahun Y."/>
            <person name="Wright H."/>
        </authorList>
    </citation>
    <scope>NUCLEOTIDE SEQUENCE [LARGE SCALE GENOMIC DNA]</scope>
</reference>
<reference key="6">
    <citation type="journal article" date="2004" name="Genome Res.">
        <title>The status, quality, and expansion of the NIH full-length cDNA project: the Mammalian Gene Collection (MGC).</title>
        <authorList>
            <consortium name="The MGC Project Team"/>
        </authorList>
    </citation>
    <scope>NUCLEOTIDE SEQUENCE [LARGE SCALE MRNA] (ISOFORM 1)</scope>
    <scope>NUCLEOTIDE SEQUENCE [LARGE SCALE MRNA] OF 606-1026 (ISOFORM 2)</scope>
    <scope>VARIANT ALA-LYS-SER-PRO-GLU-LYS-645 INS</scope>
    <source>
        <tissue>Eye</tissue>
    </source>
</reference>
<reference key="7">
    <citation type="journal article" date="1996" name="J. Biol. Chem.">
        <title>PKN associates and phosphorylates the head-rod domain of neurofilament protein.</title>
        <authorList>
            <person name="Mukai H."/>
            <person name="Toshimori M."/>
            <person name="Shibata H."/>
            <person name="Kitagawa M."/>
            <person name="Shimakawa M."/>
            <person name="Miyahara M."/>
            <person name="Sunakawa H."/>
            <person name="Ono Y."/>
        </authorList>
    </citation>
    <scope>PHOSPHORYLATION BY PKN1</scope>
</reference>
<reference key="8">
    <citation type="journal article" date="2014" name="J. Proteomics">
        <title>An enzyme assisted RP-RPLC approach for in-depth analysis of human liver phosphoproteome.</title>
        <authorList>
            <person name="Bian Y."/>
            <person name="Song C."/>
            <person name="Cheng K."/>
            <person name="Dong M."/>
            <person name="Wang F."/>
            <person name="Huang J."/>
            <person name="Sun D."/>
            <person name="Wang L."/>
            <person name="Ye M."/>
            <person name="Zou H."/>
        </authorList>
    </citation>
    <scope>PHOSPHORYLATION [LARGE SCALE ANALYSIS] AT SER-540; SER-574; SER-628; SER-668 AND SER-682</scope>
    <scope>IDENTIFICATION BY MASS SPECTROMETRY [LARGE SCALE ANALYSIS]</scope>
    <source>
        <tissue>Liver</tissue>
    </source>
</reference>
<reference key="9">
    <citation type="journal article" date="2016" name="Am. J. Hum. Genet.">
        <title>Cryptic amyloidogenic elements in the 3' UTRs of neurofilament genes trigger axonal neuropathy.</title>
        <authorList>
            <person name="Rebelo A.P."/>
            <person name="Abrams A.J."/>
            <person name="Cottenie E."/>
            <person name="Horga A."/>
            <person name="Gonzalez M."/>
            <person name="Bis D.M."/>
            <person name="Sanchez-Mejias A."/>
            <person name="Pinto M."/>
            <person name="Buglo E."/>
            <person name="Markel K."/>
            <person name="Prince J."/>
            <person name="Laura M."/>
            <person name="Houlden H."/>
            <person name="Blake J."/>
            <person name="Woodward C."/>
            <person name="Sweeney M.G."/>
            <person name="Holton J.L."/>
            <person name="Hanna M."/>
            <person name="Dallman J.E."/>
            <person name="Auer-Grumbach M."/>
            <person name="Reilly M.M."/>
            <person name="Zuchner S."/>
        </authorList>
    </citation>
    <scope>SUBCELLULAR LOCATION</scope>
    <scope>INVOLVEMENT IN CMT2CC</scope>
</reference>
<reference key="10">
    <citation type="journal article" date="1994" name="Hum. Mol. Genet.">
        <title>Variants of the heavy neurofilament subunit are associated with the development of amyotrophic lateral sclerosis.</title>
        <authorList>
            <person name="Figlewicz D.A."/>
            <person name="Krizus A."/>
            <person name="Martinoli M.G."/>
            <person name="Meininger V."/>
            <person name="Dib M."/>
            <person name="Rouleau G.A."/>
            <person name="Julien J.-P."/>
        </authorList>
    </citation>
    <scope>VARIANT ALS LYS-790 DEL</scope>
</reference>